<name>Y8738_DICDI</name>
<proteinExistence type="predicted"/>
<protein>
    <recommendedName>
        <fullName>Uncharacterized transmembrane protein DDB_G0295689</fullName>
    </recommendedName>
</protein>
<keyword id="KW-0472">Membrane</keyword>
<keyword id="KW-1185">Reference proteome</keyword>
<keyword id="KW-0812">Transmembrane</keyword>
<keyword id="KW-1133">Transmembrane helix</keyword>
<reference key="1">
    <citation type="journal article" date="2005" name="Nature">
        <title>The genome of the social amoeba Dictyostelium discoideum.</title>
        <authorList>
            <person name="Eichinger L."/>
            <person name="Pachebat J.A."/>
            <person name="Gloeckner G."/>
            <person name="Rajandream M.A."/>
            <person name="Sucgang R."/>
            <person name="Berriman M."/>
            <person name="Song J."/>
            <person name="Olsen R."/>
            <person name="Szafranski K."/>
            <person name="Xu Q."/>
            <person name="Tunggal B."/>
            <person name="Kummerfeld S."/>
            <person name="Madera M."/>
            <person name="Konfortov B.A."/>
            <person name="Rivero F."/>
            <person name="Bankier A.T."/>
            <person name="Lehmann R."/>
            <person name="Hamlin N."/>
            <person name="Davies R."/>
            <person name="Gaudet P."/>
            <person name="Fey P."/>
            <person name="Pilcher K."/>
            <person name="Chen G."/>
            <person name="Saunders D."/>
            <person name="Sodergren E.J."/>
            <person name="Davis P."/>
            <person name="Kerhornou A."/>
            <person name="Nie X."/>
            <person name="Hall N."/>
            <person name="Anjard C."/>
            <person name="Hemphill L."/>
            <person name="Bason N."/>
            <person name="Farbrother P."/>
            <person name="Desany B."/>
            <person name="Just E."/>
            <person name="Morio T."/>
            <person name="Rost R."/>
            <person name="Churcher C.M."/>
            <person name="Cooper J."/>
            <person name="Haydock S."/>
            <person name="van Driessche N."/>
            <person name="Cronin A."/>
            <person name="Goodhead I."/>
            <person name="Muzny D.M."/>
            <person name="Mourier T."/>
            <person name="Pain A."/>
            <person name="Lu M."/>
            <person name="Harper D."/>
            <person name="Lindsay R."/>
            <person name="Hauser H."/>
            <person name="James K.D."/>
            <person name="Quiles M."/>
            <person name="Madan Babu M."/>
            <person name="Saito T."/>
            <person name="Buchrieser C."/>
            <person name="Wardroper A."/>
            <person name="Felder M."/>
            <person name="Thangavelu M."/>
            <person name="Johnson D."/>
            <person name="Knights A."/>
            <person name="Loulseged H."/>
            <person name="Mungall K.L."/>
            <person name="Oliver K."/>
            <person name="Price C."/>
            <person name="Quail M.A."/>
            <person name="Urushihara H."/>
            <person name="Hernandez J."/>
            <person name="Rabbinowitsch E."/>
            <person name="Steffen D."/>
            <person name="Sanders M."/>
            <person name="Ma J."/>
            <person name="Kohara Y."/>
            <person name="Sharp S."/>
            <person name="Simmonds M.N."/>
            <person name="Spiegler S."/>
            <person name="Tivey A."/>
            <person name="Sugano S."/>
            <person name="White B."/>
            <person name="Walker D."/>
            <person name="Woodward J.R."/>
            <person name="Winckler T."/>
            <person name="Tanaka Y."/>
            <person name="Shaulsky G."/>
            <person name="Schleicher M."/>
            <person name="Weinstock G.M."/>
            <person name="Rosenthal A."/>
            <person name="Cox E.C."/>
            <person name="Chisholm R.L."/>
            <person name="Gibbs R.A."/>
            <person name="Loomis W.F."/>
            <person name="Platzer M."/>
            <person name="Kay R.R."/>
            <person name="Williams J.G."/>
            <person name="Dear P.H."/>
            <person name="Noegel A.A."/>
            <person name="Barrell B.G."/>
            <person name="Kuspa A."/>
        </authorList>
    </citation>
    <scope>NUCLEOTIDE SEQUENCE [LARGE SCALE GENOMIC DNA]</scope>
    <source>
        <strain>AX4</strain>
    </source>
</reference>
<gene>
    <name type="ORF">DDB_G0295689</name>
</gene>
<comment type="subcellular location">
    <subcellularLocation>
        <location evidence="2">Membrane</location>
        <topology evidence="2">Multi-pass membrane protein</topology>
    </subcellularLocation>
</comment>
<dbReference type="EMBL" id="AAFI02000100">
    <property type="protein sequence ID" value="EDR41047.1"/>
    <property type="molecule type" value="Genomic_DNA"/>
</dbReference>
<dbReference type="RefSeq" id="XP_001733025.1">
    <property type="nucleotide sequence ID" value="XM_001732973.1"/>
</dbReference>
<dbReference type="SMR" id="B0G162"/>
<dbReference type="FunCoup" id="B0G162">
    <property type="interactions" value="70"/>
</dbReference>
<dbReference type="PaxDb" id="44689-DDB0238738"/>
<dbReference type="EnsemblProtists" id="EDR41047">
    <property type="protein sequence ID" value="EDR41047"/>
    <property type="gene ID" value="DDB_G0295689"/>
</dbReference>
<dbReference type="GeneID" id="8626094"/>
<dbReference type="KEGG" id="ddi:DDB_G0295689"/>
<dbReference type="dictyBase" id="DDB_G0295689"/>
<dbReference type="VEuPathDB" id="AmoebaDB:DDB_G0295689"/>
<dbReference type="eggNOG" id="ENOG502RINH">
    <property type="taxonomic scope" value="Eukaryota"/>
</dbReference>
<dbReference type="HOGENOM" id="CLU_1900148_0_0_1"/>
<dbReference type="InParanoid" id="B0G162"/>
<dbReference type="OMA" id="PYWIYLK"/>
<dbReference type="PRO" id="PR:B0G162"/>
<dbReference type="Proteomes" id="UP000002195">
    <property type="component" value="Chromosome 5"/>
</dbReference>
<dbReference type="GO" id="GO:0016020">
    <property type="term" value="C:membrane"/>
    <property type="evidence" value="ECO:0007669"/>
    <property type="project" value="UniProtKB-SubCell"/>
</dbReference>
<sequence length="134" mass="14842">MGAIGFTGPFWIYFKRAADKKTFRSVAVFLVRAVILLIFAAFGNIGSIKKSKILLLKFSIINIIMLLFGIAQIIVTNVVDCENDPDNSFSFLCSNSEGAYYAPMILLLAVNLCGAVFGLILRYVIVHDTKGNYY</sequence>
<accession>B0G162</accession>
<feature type="chain" id="PRO_0000343907" description="Uncharacterized transmembrane protein DDB_G0295689">
    <location>
        <begin position="1"/>
        <end position="134"/>
    </location>
</feature>
<feature type="transmembrane region" description="Helical" evidence="1">
    <location>
        <begin position="26"/>
        <end position="46"/>
    </location>
</feature>
<feature type="transmembrane region" description="Helical" evidence="1">
    <location>
        <begin position="55"/>
        <end position="75"/>
    </location>
</feature>
<feature type="transmembrane region" description="Helical" evidence="1">
    <location>
        <begin position="101"/>
        <end position="121"/>
    </location>
</feature>
<evidence type="ECO:0000255" key="1"/>
<evidence type="ECO:0000305" key="2"/>
<organism>
    <name type="scientific">Dictyostelium discoideum</name>
    <name type="common">Social amoeba</name>
    <dbReference type="NCBI Taxonomy" id="44689"/>
    <lineage>
        <taxon>Eukaryota</taxon>
        <taxon>Amoebozoa</taxon>
        <taxon>Evosea</taxon>
        <taxon>Eumycetozoa</taxon>
        <taxon>Dictyostelia</taxon>
        <taxon>Dictyosteliales</taxon>
        <taxon>Dictyosteliaceae</taxon>
        <taxon>Dictyostelium</taxon>
    </lineage>
</organism>